<accession>P29121</accession>
<accession>Q62094</accession>
<dbReference type="EC" id="3.4.21.-"/>
<dbReference type="EMBL" id="D01093">
    <property type="protein sequence ID" value="BAA00877.1"/>
    <property type="molecule type" value="mRNA"/>
</dbReference>
<dbReference type="EMBL" id="L21221">
    <property type="protein sequence ID" value="AAA39973.1"/>
    <property type="molecule type" value="Genomic_DNA"/>
</dbReference>
<dbReference type="EMBL" id="L21210">
    <property type="protein sequence ID" value="AAA39973.1"/>
    <property type="status" value="JOINED"/>
    <property type="molecule type" value="Genomic_DNA"/>
</dbReference>
<dbReference type="EMBL" id="L21211">
    <property type="protein sequence ID" value="AAA39973.1"/>
    <property type="status" value="JOINED"/>
    <property type="molecule type" value="Genomic_DNA"/>
</dbReference>
<dbReference type="EMBL" id="L21212">
    <property type="protein sequence ID" value="AAA39973.1"/>
    <property type="status" value="JOINED"/>
    <property type="molecule type" value="Genomic_DNA"/>
</dbReference>
<dbReference type="EMBL" id="L21213">
    <property type="protein sequence ID" value="AAA39973.1"/>
    <property type="status" value="JOINED"/>
    <property type="molecule type" value="Genomic_DNA"/>
</dbReference>
<dbReference type="EMBL" id="L21214">
    <property type="protein sequence ID" value="AAA39973.1"/>
    <property type="status" value="JOINED"/>
    <property type="molecule type" value="Genomic_DNA"/>
</dbReference>
<dbReference type="EMBL" id="L21215">
    <property type="protein sequence ID" value="AAA39973.1"/>
    <property type="status" value="JOINED"/>
    <property type="molecule type" value="Genomic_DNA"/>
</dbReference>
<dbReference type="EMBL" id="L21216">
    <property type="protein sequence ID" value="AAA39973.1"/>
    <property type="status" value="JOINED"/>
    <property type="molecule type" value="Genomic_DNA"/>
</dbReference>
<dbReference type="EMBL" id="L21217">
    <property type="protein sequence ID" value="AAA39973.1"/>
    <property type="status" value="JOINED"/>
    <property type="molecule type" value="Genomic_DNA"/>
</dbReference>
<dbReference type="EMBL" id="L21218">
    <property type="protein sequence ID" value="AAA39973.1"/>
    <property type="status" value="JOINED"/>
    <property type="molecule type" value="Genomic_DNA"/>
</dbReference>
<dbReference type="EMBL" id="L21219">
    <property type="protein sequence ID" value="AAA39973.1"/>
    <property type="status" value="JOINED"/>
    <property type="molecule type" value="Genomic_DNA"/>
</dbReference>
<dbReference type="EMBL" id="L21220">
    <property type="protein sequence ID" value="AAA39973.1"/>
    <property type="status" value="JOINED"/>
    <property type="molecule type" value="Genomic_DNA"/>
</dbReference>
<dbReference type="EMBL" id="L21222">
    <property type="protein sequence ID" value="AAA39973.1"/>
    <property type="status" value="JOINED"/>
    <property type="molecule type" value="Genomic_DNA"/>
</dbReference>
<dbReference type="EMBL" id="L21223">
    <property type="protein sequence ID" value="AAA39973.1"/>
    <property type="status" value="JOINED"/>
    <property type="molecule type" value="Genomic_DNA"/>
</dbReference>
<dbReference type="CCDS" id="CCDS24018.1">
    <molecule id="P29121-1"/>
</dbReference>
<dbReference type="PIR" id="A54306">
    <property type="entry name" value="A54306"/>
</dbReference>
<dbReference type="RefSeq" id="NP_032819.1">
    <molecule id="P29121-1"/>
    <property type="nucleotide sequence ID" value="NM_008793.3"/>
</dbReference>
<dbReference type="RefSeq" id="XP_030100811.1">
    <molecule id="P29121-3"/>
    <property type="nucleotide sequence ID" value="XM_030244951.2"/>
</dbReference>
<dbReference type="SMR" id="P29121"/>
<dbReference type="BioGRID" id="202060">
    <property type="interactions" value="1"/>
</dbReference>
<dbReference type="FunCoup" id="P29121">
    <property type="interactions" value="30"/>
</dbReference>
<dbReference type="STRING" id="10090.ENSMUSP00000020340"/>
<dbReference type="MEROPS" id="S08.074"/>
<dbReference type="GlyCosmos" id="P29121">
    <property type="glycosylation" value="1 site, No reported glycans"/>
</dbReference>
<dbReference type="GlyGen" id="P29121">
    <property type="glycosylation" value="2 sites, 1 N-linked glycan (1 site)"/>
</dbReference>
<dbReference type="iPTMnet" id="P29121"/>
<dbReference type="PhosphoSitePlus" id="P29121"/>
<dbReference type="jPOST" id="P29121"/>
<dbReference type="PaxDb" id="10090-ENSMUSP00000020340"/>
<dbReference type="ProteomicsDB" id="287970">
    <molecule id="P29121-1"/>
</dbReference>
<dbReference type="ProteomicsDB" id="287971">
    <molecule id="P29121-2"/>
</dbReference>
<dbReference type="ProteomicsDB" id="287972">
    <molecule id="P29121-3"/>
</dbReference>
<dbReference type="ProteomicsDB" id="287973">
    <molecule id="P29121-4"/>
</dbReference>
<dbReference type="ProteomicsDB" id="287974">
    <molecule id="P29121-5"/>
</dbReference>
<dbReference type="ProteomicsDB" id="287975">
    <molecule id="P29121-6"/>
</dbReference>
<dbReference type="ProteomicsDB" id="287976">
    <molecule id="P29121-7"/>
</dbReference>
<dbReference type="ProteomicsDB" id="287977">
    <molecule id="P29121-8"/>
</dbReference>
<dbReference type="Antibodypedia" id="1614">
    <property type="antibodies" value="153 antibodies from 24 providers"/>
</dbReference>
<dbReference type="DNASU" id="18551"/>
<dbReference type="Ensembl" id="ENSMUST00000020340.15">
    <molecule id="P29121-1"/>
    <property type="protein sequence ID" value="ENSMUSP00000020340.9"/>
    <property type="gene ID" value="ENSMUSG00000020131.15"/>
</dbReference>
<dbReference type="GeneID" id="18551"/>
<dbReference type="KEGG" id="mmu:18551"/>
<dbReference type="UCSC" id="uc007gcs.2">
    <molecule id="P29121-1"/>
    <property type="organism name" value="mouse"/>
</dbReference>
<dbReference type="AGR" id="MGI:97514"/>
<dbReference type="CTD" id="54760"/>
<dbReference type="MGI" id="MGI:97514">
    <property type="gene designation" value="Pcsk4"/>
</dbReference>
<dbReference type="VEuPathDB" id="HostDB:ENSMUSG00000020131"/>
<dbReference type="eggNOG" id="KOG3525">
    <property type="taxonomic scope" value="Eukaryota"/>
</dbReference>
<dbReference type="GeneTree" id="ENSGT00940000161989"/>
<dbReference type="HOGENOM" id="CLU_002976_4_0_1"/>
<dbReference type="InParanoid" id="P29121"/>
<dbReference type="OMA" id="RDGTCQE"/>
<dbReference type="OrthoDB" id="300641at2759"/>
<dbReference type="PhylomeDB" id="P29121"/>
<dbReference type="TreeFam" id="TF314277"/>
<dbReference type="BRENDA" id="3.4.21.B24">
    <property type="organism ID" value="3474"/>
</dbReference>
<dbReference type="BRENDA" id="3.4.21.B25">
    <property type="organism ID" value="3474"/>
</dbReference>
<dbReference type="BioGRID-ORCS" id="18551">
    <property type="hits" value="3 hits in 77 CRISPR screens"/>
</dbReference>
<dbReference type="PRO" id="PR:P29121"/>
<dbReference type="Proteomes" id="UP000000589">
    <property type="component" value="Chromosome 10"/>
</dbReference>
<dbReference type="RNAct" id="P29121">
    <property type="molecule type" value="protein"/>
</dbReference>
<dbReference type="Bgee" id="ENSMUSG00000020131">
    <property type="expression patterns" value="Expressed in spermatid and 160 other cell types or tissues"/>
</dbReference>
<dbReference type="ExpressionAtlas" id="P29121">
    <property type="expression patterns" value="baseline and differential"/>
</dbReference>
<dbReference type="GO" id="GO:0002080">
    <property type="term" value="C:acrosomal membrane"/>
    <property type="evidence" value="ECO:0000314"/>
    <property type="project" value="MGI"/>
</dbReference>
<dbReference type="GO" id="GO:0001669">
    <property type="term" value="C:acrosomal vesicle"/>
    <property type="evidence" value="ECO:0000314"/>
    <property type="project" value="UniProtKB"/>
</dbReference>
<dbReference type="GO" id="GO:0005788">
    <property type="term" value="C:endoplasmic reticulum lumen"/>
    <property type="evidence" value="ECO:0000304"/>
    <property type="project" value="Reactome"/>
</dbReference>
<dbReference type="GO" id="GO:0004252">
    <property type="term" value="F:serine-type endopeptidase activity"/>
    <property type="evidence" value="ECO:0007669"/>
    <property type="project" value="InterPro"/>
</dbReference>
<dbReference type="GO" id="GO:0007340">
    <property type="term" value="P:acrosome reaction"/>
    <property type="evidence" value="ECO:0000315"/>
    <property type="project" value="MGI"/>
</dbReference>
<dbReference type="GO" id="GO:0007339">
    <property type="term" value="P:binding of sperm to zona pellucida"/>
    <property type="evidence" value="ECO:0000315"/>
    <property type="project" value="MGI"/>
</dbReference>
<dbReference type="GO" id="GO:0009566">
    <property type="term" value="P:fertilization"/>
    <property type="evidence" value="ECO:0000314"/>
    <property type="project" value="UniProtKB"/>
</dbReference>
<dbReference type="GO" id="GO:0016485">
    <property type="term" value="P:protein processing"/>
    <property type="evidence" value="ECO:0000250"/>
    <property type="project" value="UniProtKB"/>
</dbReference>
<dbReference type="GO" id="GO:0022414">
    <property type="term" value="P:reproductive process"/>
    <property type="evidence" value="ECO:0000315"/>
    <property type="project" value="UniProtKB"/>
</dbReference>
<dbReference type="GO" id="GO:0048240">
    <property type="term" value="P:sperm capacitation"/>
    <property type="evidence" value="ECO:0000314"/>
    <property type="project" value="UniProtKB"/>
</dbReference>
<dbReference type="CDD" id="cd04059">
    <property type="entry name" value="Peptidases_S8_Protein_convertases_Kexins_Furin-like"/>
    <property type="match status" value="1"/>
</dbReference>
<dbReference type="FunFam" id="3.40.50.200:FF:000001">
    <property type="entry name" value="Furin 2, isoform B"/>
    <property type="match status" value="1"/>
</dbReference>
<dbReference type="FunFam" id="2.60.120.260:FF:000034">
    <property type="entry name" value="furin isoform X2"/>
    <property type="match status" value="1"/>
</dbReference>
<dbReference type="FunFam" id="3.30.70.850:FF:000001">
    <property type="entry name" value="Proprotein convertase subtilisin/kexin type 5"/>
    <property type="match status" value="1"/>
</dbReference>
<dbReference type="Gene3D" id="2.60.120.260">
    <property type="entry name" value="Galactose-binding domain-like"/>
    <property type="match status" value="1"/>
</dbReference>
<dbReference type="Gene3D" id="3.30.70.850">
    <property type="entry name" value="Peptidase S8, pro-domain"/>
    <property type="match status" value="1"/>
</dbReference>
<dbReference type="Gene3D" id="3.40.50.200">
    <property type="entry name" value="Peptidase S8/S53 domain"/>
    <property type="match status" value="1"/>
</dbReference>
<dbReference type="InterPro" id="IPR008979">
    <property type="entry name" value="Galactose-bd-like_sf"/>
</dbReference>
<dbReference type="InterPro" id="IPR034182">
    <property type="entry name" value="Kexin/furin"/>
</dbReference>
<dbReference type="InterPro" id="IPR002884">
    <property type="entry name" value="P_dom"/>
</dbReference>
<dbReference type="InterPro" id="IPR000209">
    <property type="entry name" value="Peptidase_S8/S53_dom"/>
</dbReference>
<dbReference type="InterPro" id="IPR036852">
    <property type="entry name" value="Peptidase_S8/S53_dom_sf"/>
</dbReference>
<dbReference type="InterPro" id="IPR023827">
    <property type="entry name" value="Peptidase_S8_Asp-AS"/>
</dbReference>
<dbReference type="InterPro" id="IPR022398">
    <property type="entry name" value="Peptidase_S8_His-AS"/>
</dbReference>
<dbReference type="InterPro" id="IPR023828">
    <property type="entry name" value="Peptidase_S8_Ser-AS"/>
</dbReference>
<dbReference type="InterPro" id="IPR015500">
    <property type="entry name" value="Peptidase_S8_subtilisin-rel"/>
</dbReference>
<dbReference type="InterPro" id="IPR032815">
    <property type="entry name" value="S8_pro-domain"/>
</dbReference>
<dbReference type="InterPro" id="IPR038466">
    <property type="entry name" value="S8_pro-domain_sf"/>
</dbReference>
<dbReference type="PANTHER" id="PTHR42884">
    <property type="entry name" value="PROPROTEIN CONVERTASE SUBTILISIN/KEXIN-RELATED"/>
    <property type="match status" value="1"/>
</dbReference>
<dbReference type="PANTHER" id="PTHR42884:SF16">
    <property type="entry name" value="PROPROTEIN CONVERTASE SUBTILISIN_KEXIN TYPE 4"/>
    <property type="match status" value="1"/>
</dbReference>
<dbReference type="Pfam" id="PF01483">
    <property type="entry name" value="P_proprotein"/>
    <property type="match status" value="1"/>
</dbReference>
<dbReference type="Pfam" id="PF00082">
    <property type="entry name" value="Peptidase_S8"/>
    <property type="match status" value="1"/>
</dbReference>
<dbReference type="Pfam" id="PF16470">
    <property type="entry name" value="S8_pro-domain"/>
    <property type="match status" value="1"/>
</dbReference>
<dbReference type="PRINTS" id="PR00723">
    <property type="entry name" value="SUBTILISIN"/>
</dbReference>
<dbReference type="SUPFAM" id="SSF49785">
    <property type="entry name" value="Galactose-binding domain-like"/>
    <property type="match status" value="1"/>
</dbReference>
<dbReference type="SUPFAM" id="SSF54897">
    <property type="entry name" value="Protease propeptides/inhibitors"/>
    <property type="match status" value="1"/>
</dbReference>
<dbReference type="SUPFAM" id="SSF52743">
    <property type="entry name" value="Subtilisin-like"/>
    <property type="match status" value="1"/>
</dbReference>
<dbReference type="PROSITE" id="PS51829">
    <property type="entry name" value="P_HOMO_B"/>
    <property type="match status" value="1"/>
</dbReference>
<dbReference type="PROSITE" id="PS51892">
    <property type="entry name" value="SUBTILASE"/>
    <property type="match status" value="1"/>
</dbReference>
<dbReference type="PROSITE" id="PS00136">
    <property type="entry name" value="SUBTILASE_ASP"/>
    <property type="match status" value="1"/>
</dbReference>
<dbReference type="PROSITE" id="PS00137">
    <property type="entry name" value="SUBTILASE_HIS"/>
    <property type="match status" value="1"/>
</dbReference>
<dbReference type="PROSITE" id="PS00138">
    <property type="entry name" value="SUBTILASE_SER"/>
    <property type="match status" value="1"/>
</dbReference>
<comment type="function">
    <text evidence="2 6 8 9 11 13">Proprotein convertase involved in the processing of hormone and other protein precursors at sites comprised of pairs of basic amino acid residues. In males, important for ADAM2 processing as well as other acrosomal proteins with roles in fertilization and critical for normal fertilization events such as sperm capacitation, acrosome reaction and binding of sperm to zona pellucida (PubMed:16371590, PubMed:19342015, PubMed:21302280, PubMed:9192653). Also plays a role in female fertility, involved in the regulation of trophoblast migration and placental development, may be through the proteolytical processing and activation of proteins such as IGF2 (By similarity). May also participate in folliculogenesis in the ovaries (PubMed:11164898).</text>
</comment>
<comment type="subunit">
    <text evidence="2">The proPCSK4 form interacts with HSPA5; the interaction takes place at the endoplasmic reticulum.</text>
</comment>
<comment type="subcellular location">
    <subcellularLocation>
        <location evidence="8 10 11">Cytoplasmic vesicle</location>
        <location evidence="8 10 11">Secretory vesicle</location>
        <location evidence="8 10 11">Acrosome membrane</location>
    </subcellularLocation>
</comment>
<comment type="alternative products">
    <event type="alternative splicing"/>
    <isoform>
        <id>P29121-1</id>
        <name>1</name>
        <name>mPC4-A</name>
        <sequence type="displayed"/>
    </isoform>
    <isoform>
        <id>P29121-2</id>
        <name>2</name>
        <sequence type="described" ref="VSP_011268"/>
    </isoform>
    <isoform>
        <id>P29121-3</id>
        <name>3</name>
        <name>mPC4-B</name>
        <sequence type="described" ref="VSP_011271"/>
    </isoform>
    <isoform>
        <id>P29121-4</id>
        <name>4</name>
        <name>mPC4-C</name>
        <sequence type="described" ref="VSP_011272"/>
    </isoform>
    <isoform>
        <id>P29121-5</id>
        <name>5</name>
        <name>E</name>
        <sequence type="described" ref="VSP_011266"/>
    </isoform>
    <isoform>
        <id>P29121-6</id>
        <name>6</name>
        <name>D</name>
        <sequence type="described" ref="VSP_011267"/>
    </isoform>
    <isoform>
        <id>P29121-7</id>
        <name>7</name>
        <name>B</name>
        <sequence type="described" ref="VSP_011269"/>
    </isoform>
    <isoform>
        <id>P29121-8</id>
        <name>8</name>
        <name>C</name>
        <sequence type="described" ref="VSP_011270"/>
    </isoform>
</comment>
<comment type="tissue specificity">
    <text evidence="6 7 8 11">Expressed abundantly in the testis since postnatal Day 16 (PubMed:1372895, PubMed:16371590, PubMed:21302280). In testis, strongly detected in round and elongated spermatids as well as spermatocytes. Also observed in residual bodies engulfed by Sertoli cells at spermatogenic stages VIII and IX (PubMed:16371590). In ovaries, expressed in macrophage-like cells of the ovarian theca, interstitium and corpora lutea (PubMed:11164898).</text>
</comment>
<comment type="developmental stage">
    <text evidence="7">Detected only after the 20th day of postnatal development. Mainly expressed in the round spermatids. Expressed mainly in the early stages of spermiogenesis.</text>
</comment>
<comment type="PTM">
    <text evidence="2">N-glycosylated.</text>
</comment>
<comment type="PTM">
    <text evidence="2">Synthesized in the endoplasmic reticulum as a zymogen, is matured by autocatalytic cleavage between the prodomain and the catalytic domain.</text>
</comment>
<comment type="disruption phenotype">
    <text evidence="8 9 12 13">Knockout males show impaired fertility (PubMed:9192653). Sperm from mutants exhibit accelerated capacitation, precocious acrosome reaction, reduced binding to egg zona pellucida, and impaired fertilizing ability (PubMed:16371590). They have abnormal acrosome formation during spermatogenesis (PubMed:22357636). Sperm proteins are hyper-tyrosine phosphorylated during capacitation (PubMed:19342015). In females, the percent of successful mating is comparable to that of their PCSK4 +/- female littermates, however the average litter size of the former is half that of the latter. Knockout ovaries treated with gonatropin are generally smaller, less hyperemic and with fewer corpora lutea than wild type. This difference is associated with a 20-fold lower level of circulating progesterone (PubMed:9192653).</text>
</comment>
<comment type="similarity">
    <text evidence="16">Belongs to the peptidase S8 family. Furin subfamily.</text>
</comment>
<reference key="1">
    <citation type="journal article" date="1992" name="J. Biol. Chem.">
        <title>Identification of the fourth member of the mammalian endoprotease family homologous to the yeast Kex2 protease. Its testis-specific expression.</title>
        <authorList>
            <person name="Nakayama K."/>
            <person name="Kim W.-S."/>
            <person name="Torii S."/>
            <person name="Hosaka M."/>
            <person name="Nakagawa T."/>
            <person name="Ikemizu J."/>
            <person name="Baba T."/>
            <person name="Murakami K."/>
        </authorList>
    </citation>
    <scope>NUCLEOTIDE SEQUENCE [MRNA] (ISOFORM 1)</scope>
    <scope>TISSUE SPECIFICITY</scope>
    <scope>DEVELOPMENTAL STAGE</scope>
    <source>
        <tissue>Testis</tissue>
    </source>
</reference>
<reference key="2">
    <citation type="journal article" date="1992" name="Mol. Endocrinol.">
        <title>Testicular expression of PC4 in the rat: molecular diversity of a novel germ cell-specific Kex2/subtilisin-like proprotein convertase.</title>
        <authorList>
            <person name="Seidah N.G."/>
            <person name="Day R."/>
            <person name="Hamelin J."/>
            <person name="Gaspar A."/>
            <person name="Collard M.W."/>
            <person name="Chretien M."/>
        </authorList>
    </citation>
    <scope>NUCLEOTIDE SEQUENCE [MRNA] (ISOFORMS 1; 3 AND 4)</scope>
    <source>
        <tissue>Testis</tissue>
    </source>
</reference>
<reference key="3">
    <citation type="journal article" date="1994" name="Genomics">
        <title>Structure of the gene for the testis-specific proprotein convertase 4 and of its alternate messenger RNA isoforms.</title>
        <authorList>
            <person name="Mbikay M."/>
            <person name="Raffin-Sanson M.-L."/>
            <person name="Tadros H."/>
            <person name="Sirois F."/>
            <person name="Seidah N.G."/>
            <person name="Chretien M."/>
        </authorList>
    </citation>
    <scope>NUCLEOTIDE SEQUENCE [GENOMIC DNA / MRNA] (ISOFORMS 1; 2; 5; 6; 7 AND 8)</scope>
    <source>
        <strain>C57BL/6J</strain>
        <tissue>Liver</tissue>
    </source>
</reference>
<reference key="4">
    <citation type="journal article" date="1997" name="Proc. Natl. Acad. Sci. U.S.A.">
        <title>Impaired fertility in mice deficient for the testicular germ-cell protease PC4.</title>
        <authorList>
            <person name="Mbikay M."/>
            <person name="Tadros H."/>
            <person name="Ishida N."/>
            <person name="Lerner C.P."/>
            <person name="De Lamirande E."/>
            <person name="Chen A."/>
            <person name="El-Alfy M."/>
            <person name="Clermont Y."/>
            <person name="Seidah N.G."/>
            <person name="Chretien M."/>
            <person name="Gagnon C."/>
            <person name="Simpson E.M."/>
        </authorList>
    </citation>
    <scope>FUNCTION</scope>
    <scope>DISRUPTION PHENOTYPE</scope>
</reference>
<reference key="5">
    <citation type="journal article" date="2001" name="J. Reprod. Immunol.">
        <title>The testicular germ-cell protease PC4 is also expressed in macrophage-like cells of the ovary.</title>
        <authorList>
            <person name="Tadros H."/>
            <person name="Chretien M."/>
            <person name="Mbikay M."/>
        </authorList>
    </citation>
    <scope>FUNCTION</scope>
    <scope>TISSUE SPECIFICITY</scope>
    <scope>DISRUPTION PHENOTYPE</scope>
</reference>
<reference key="6">
    <citation type="journal article" date="2006" name="Biol. Reprod.">
        <title>Sperm from mice genetically deficient for the PCSK4 proteinase exhibit accelerated capacitation, precocious acrosome reaction, reduced binding to egg zona pellucida, and impaired fertilizing ability.</title>
        <authorList>
            <person name="Gyamera-Acheampong C."/>
            <person name="Tantibhedhyangkul J."/>
            <person name="Weerachatyanukul W."/>
            <person name="Tadros H."/>
            <person name="Xu H."/>
            <person name="van de Loo J.W."/>
            <person name="Pelletier R.M."/>
            <person name="Tanphaichitr N."/>
            <person name="Mbikay M."/>
        </authorList>
    </citation>
    <scope>FUNCTION</scope>
    <scope>DISRUPTION PHENOTYPE</scope>
    <scope>SUBCELLULAR LOCATION</scope>
    <scope>TISSUE SPECIFICITY</scope>
</reference>
<reference key="7">
    <citation type="journal article" date="2010" name="Fertil. Steril.">
        <title>PCSK4-null sperm display enhanced protein tyrosine phosphorylation and ADAM2 proteolytic processing during in vitro capacitation.</title>
        <authorList>
            <person name="Gyamera-Acheampong C."/>
            <person name="Vasilescu J."/>
            <person name="Figeys D."/>
            <person name="Mbikay M."/>
        </authorList>
    </citation>
    <scope>FUNCTION</scope>
    <scope>DISRUPTION PHENOTYPE</scope>
</reference>
<reference key="8">
    <citation type="journal article" date="2011" name="J. Cell. Physiol.">
        <title>Enzymatic activity of sperm proprotein convertase is important for mammalian fertilization.</title>
        <authorList>
            <person name="Iamsaard S."/>
            <person name="Vanichviriyakit R."/>
            <person name="Hommalai G."/>
            <person name="Saewu A."/>
            <person name="Srakaew N."/>
            <person name="Withyachumnarnkul B."/>
            <person name="Basak A."/>
            <person name="Tanphaichitr N."/>
        </authorList>
    </citation>
    <scope>FUNCTION</scope>
    <scope>SUBCELLULAR LOCATION</scope>
    <scope>TISSUE SPECIFICITY</scope>
</reference>
<reference key="9">
    <citation type="journal article" date="2011" name="Mol. Cell. Biochem.">
        <title>The precursor to the germ cell-specific PCSK4 proteinase is inefficiently activated in transfected somatic cells: evidence of interaction with the BiP chaperone.</title>
        <authorList>
            <person name="Gyamera-Acheampong C."/>
            <person name="Sirois F."/>
            <person name="Denis N.J."/>
            <person name="Mishra P."/>
            <person name="Figeys D."/>
            <person name="Basak A."/>
            <person name="Mbikay M."/>
        </authorList>
    </citation>
    <scope>SUBCELLULAR LOCATION</scope>
</reference>
<reference key="10">
    <citation type="journal article" date="2012" name="Mol. Hum. Reprod.">
        <title>Alteration in the processing of the ACRBP/sp32 protein and sperm head/acrosome malformations in proprotein convertase 4 (PCSK4) null mice.</title>
        <authorList>
            <person name="Tardif S."/>
            <person name="Guyonnet B."/>
            <person name="Cormier N."/>
            <person name="Cornwall G.A."/>
        </authorList>
    </citation>
    <scope>DISRUPTION PHENOTYPE</scope>
</reference>
<organism>
    <name type="scientific">Mus musculus</name>
    <name type="common">Mouse</name>
    <dbReference type="NCBI Taxonomy" id="10090"/>
    <lineage>
        <taxon>Eukaryota</taxon>
        <taxon>Metazoa</taxon>
        <taxon>Chordata</taxon>
        <taxon>Craniata</taxon>
        <taxon>Vertebrata</taxon>
        <taxon>Euteleostomi</taxon>
        <taxon>Mammalia</taxon>
        <taxon>Eutheria</taxon>
        <taxon>Euarchontoglires</taxon>
        <taxon>Glires</taxon>
        <taxon>Rodentia</taxon>
        <taxon>Myomorpha</taxon>
        <taxon>Muroidea</taxon>
        <taxon>Muridae</taxon>
        <taxon>Murinae</taxon>
        <taxon>Mus</taxon>
        <taxon>Mus</taxon>
    </lineage>
</organism>
<keyword id="KW-0025">Alternative splicing</keyword>
<keyword id="KW-0165">Cleavage on pair of basic residues</keyword>
<keyword id="KW-0968">Cytoplasmic vesicle</keyword>
<keyword id="KW-0325">Glycoprotein</keyword>
<keyword id="KW-0378">Hydrolase</keyword>
<keyword id="KW-0472">Membrane</keyword>
<keyword id="KW-0645">Protease</keyword>
<keyword id="KW-1185">Reference proteome</keyword>
<keyword id="KW-0720">Serine protease</keyword>
<keyword id="KW-0732">Signal</keyword>
<keyword id="KW-0865">Zymogen</keyword>
<protein>
    <recommendedName>
        <fullName>Proprotein convertase subtilisin/kexin type 4</fullName>
        <ecNumber>3.4.21.-</ecNumber>
    </recommendedName>
    <alternativeName>
        <fullName>KEX2-like endoprotease 3</fullName>
    </alternativeName>
    <alternativeName>
        <fullName>Neuroendocrine convertase 3</fullName>
        <shortName>NEC 3</shortName>
    </alternativeName>
    <alternativeName>
        <fullName>Prohormone convertase 3</fullName>
    </alternativeName>
</protein>
<evidence type="ECO:0000250" key="1"/>
<evidence type="ECO:0000250" key="2">
    <source>
        <dbReference type="UniProtKB" id="Q6UW60"/>
    </source>
</evidence>
<evidence type="ECO:0000255" key="3"/>
<evidence type="ECO:0000255" key="4">
    <source>
        <dbReference type="PROSITE-ProRule" id="PRU01173"/>
    </source>
</evidence>
<evidence type="ECO:0000255" key="5">
    <source>
        <dbReference type="PROSITE-ProRule" id="PRU01240"/>
    </source>
</evidence>
<evidence type="ECO:0000269" key="6">
    <source>
    </source>
</evidence>
<evidence type="ECO:0000269" key="7">
    <source>
    </source>
</evidence>
<evidence type="ECO:0000269" key="8">
    <source>
    </source>
</evidence>
<evidence type="ECO:0000269" key="9">
    <source>
    </source>
</evidence>
<evidence type="ECO:0000269" key="10">
    <source>
    </source>
</evidence>
<evidence type="ECO:0000269" key="11">
    <source>
    </source>
</evidence>
<evidence type="ECO:0000269" key="12">
    <source>
    </source>
</evidence>
<evidence type="ECO:0000269" key="13">
    <source>
    </source>
</evidence>
<evidence type="ECO:0000303" key="14">
    <source>
    </source>
</evidence>
<evidence type="ECO:0000303" key="15">
    <source>
    </source>
</evidence>
<evidence type="ECO:0000305" key="16"/>
<feature type="signal peptide" evidence="1">
    <location>
        <begin position="1"/>
        <end position="26"/>
    </location>
</feature>
<feature type="propeptide" id="PRO_0000027098" evidence="3">
    <location>
        <begin position="27"/>
        <end position="110"/>
    </location>
</feature>
<feature type="chain" id="PRO_0000027099" description="Proprotein convertase subtilisin/kexin type 4">
    <location>
        <begin position="111"/>
        <end position="655"/>
    </location>
</feature>
<feature type="domain" description="Peptidase S8" evidence="5">
    <location>
        <begin position="123"/>
        <end position="437"/>
    </location>
</feature>
<feature type="domain" description="P/Homo B" evidence="4">
    <location>
        <begin position="446"/>
        <end position="580"/>
    </location>
</feature>
<feature type="active site" description="Charge relay system" evidence="5">
    <location>
        <position position="155"/>
    </location>
</feature>
<feature type="active site" description="Charge relay system" evidence="5">
    <location>
        <position position="196"/>
    </location>
</feature>
<feature type="active site" description="Charge relay system" evidence="5">
    <location>
        <position position="370"/>
    </location>
</feature>
<feature type="glycosylation site" description="N-linked (GlcNAc...) asparagine" evidence="3">
    <location>
        <position position="472"/>
    </location>
</feature>
<feature type="splice variant" id="VSP_011266" description="In isoform 5." evidence="15">
    <location>
        <begin position="22"/>
        <end position="60"/>
    </location>
</feature>
<feature type="splice variant" id="VSP_011267" description="In isoform 6." evidence="15">
    <location>
        <begin position="51"/>
        <end position="60"/>
    </location>
</feature>
<feature type="splice variant" id="VSP_011268" description="In isoform 2." evidence="15">
    <location>
        <begin position="273"/>
        <end position="282"/>
    </location>
</feature>
<feature type="splice variant" id="VSP_011271" description="In isoform 3." evidence="14">
    <original>VTSRARACVQRDTEGLCQESHSPLSILAGLCLISSQQWWWLYSHPQQPVTEGQASCHPPVTPAAAA</original>
    <variation>KVTVPSPSWQDSASSPASSGGGSTATHSSQ</variation>
    <location>
        <begin position="590"/>
        <end position="655"/>
    </location>
</feature>
<feature type="splice variant" id="VSP_011272" description="In isoform 4." evidence="14">
    <original>VTSRARACVQRDTEGLCQESHSPLSILAGLCLISSQQWWWLYSHPQQPVTEGQASCHPPVTPAAAA</original>
    <variation>DSASSPASSGGGSTATHSSQ</variation>
    <location>
        <begin position="590"/>
        <end position="655"/>
    </location>
</feature>
<feature type="splice variant" id="VSP_011270" description="In isoform 8." evidence="15">
    <location>
        <begin position="590"/>
        <end position="617"/>
    </location>
</feature>
<feature type="splice variant" id="VSP_011269" description="In isoform 7." evidence="15">
    <location>
        <begin position="590"/>
        <end position="608"/>
    </location>
</feature>
<feature type="sequence conflict" description="In Ref. 3; AAA39973." evidence="16" ref="3">
    <original>D</original>
    <variation>N</variation>
    <location>
        <position position="65"/>
    </location>
</feature>
<feature type="sequence conflict" description="In Ref. 3; AAA39973." evidence="16" ref="3">
    <original>R</original>
    <variation>P</variation>
    <location>
        <position position="87"/>
    </location>
</feature>
<name>PCSK4_MOUSE</name>
<gene>
    <name type="primary">Pcsk4</name>
    <name type="synonym">Nec-3</name>
    <name type="synonym">Nec3</name>
</gene>
<sequence>MRPSQTELWLGLTLTLALLAVRWASAQAPIYVSSWAVRVTKGYQEAERLARKFGFVNLGQIFPDDQYFHLRHRGVAQQSLTPHWGHRLRLKKDPKVRWFEQQTLRRRVKRSLVVPTDPWFSKQWYMNKEIQQDLNILKAWNQGLTGRGVVISILDDGIEKDHPDLWANYDPLASYDFNDYDPDPQPRYTPNDENRHGTRCAGEVSATANNGFCGAGVAFNARIGGVRMLDGAITDIVEAQSLSLQPQHIHIYSASWGPEDDGRTVDGPGLLTQEAFRRGVTKGRQGLGTLFIWASGNGGLHYDNCNCDGYTNSIHTLSVGSTTRQGRVPWYSEACASTFTTTFSSGVVTDPQIVTTDLHHQCTDKHTGTSASAPLAAGMIALALEANPLLTWRDLQHLVVRASRPAQLQAEDWRINGVGRQVSHHYGYGLLDAGLLVDLARVWLPTKPQKKCAIRVVHTPTPILPRMLVPKNVTACSDGSRRRLIRSLEHVQVQLSLSYSRRGDLEIFLTSPMGTRSTLVAIRPLDISGQGYNNWIFMSTHYWDEDPQGLWTLGLENKGYYFNTGTLYYYTLLLYGTAEDMTARPQAPQVTSRARACVQRDTEGLCQESHSPLSILAGLCLISSQQWWWLYSHPQQPVTEGQASCHPPVTPAAAA</sequence>
<proteinExistence type="evidence at transcript level"/>